<evidence type="ECO:0000250" key="1">
    <source>
        <dbReference type="UniProtKB" id="Q8U1Y4"/>
    </source>
</evidence>
<evidence type="ECO:0000269" key="2">
    <source>
    </source>
</evidence>
<evidence type="ECO:0000303" key="3">
    <source>
    </source>
</evidence>
<evidence type="ECO:0000305" key="4"/>
<evidence type="ECO:0000305" key="5">
    <source>
    </source>
</evidence>
<evidence type="ECO:0000312" key="6">
    <source>
        <dbReference type="EMBL" id="SFD01151.1"/>
    </source>
</evidence>
<name>BILC_COLS4</name>
<accession>A0A1I1NU16</accession>
<sequence>MNFSIKATIRAWSAPEHKLACRKQLWRKIVAELERRGKRRHEAGTFLLGIERNGRKEVQSAVYYDDLDPSAYDSGVCILHGDAFAKLWSHCREKGLTVVADVHTHPGAGFQSDSDRTNPMVARQGHIAIILPNFARWPIRQGNLGIYEYCGQHEWLERSPAHAPNFFYTGFWS</sequence>
<comment type="function">
    <text evidence="2 5">Component of the Bil (bacterial ISG15-like) antiviral defense system, composed of BilA, BilB, BilC and BilD. The Bil system specifically conjugates a ubiquitin-like moiety (bilA) to the bacteriophage central tail fiber (CTF, or tip attachment protein J) via reactions involving E1 (bilD) and E2 (bilB). Modifies CTF of phage SECphi27 and SECphi4, which probably interferes with assembly of the phage tail. Also modifies T5 baseplate hub protein pb3 (gene D16), but not gp27 of phage T6 (Bil defends against T6) (PubMed:39020165). BilC is a probable metalloprotease that may cleave non-specifically conjugated targets (Probable) (PubMed:39020165). Bil-encoding bacteria produce mostly defective phage SECphi27, many of which have phage assembly defects, including no tails. SECphi27 phage progeny produced in E.coli with the Bil system inject less DNA into naive host cells, maybe because the phage are less able to adsorb and inject their DNA into host cells.</text>
</comment>
<comment type="function">
    <text evidence="2">Expression of the Bil system in E.coli (strain MG1655) confers about 100-fold resistance to phage SECphi27, SECphi18, SECphi6, SECphi4 and T5, but not to SECphi17. When cells expressing the Bil system are infected by phage SECphi27 at low multiplicity of infection (0.03 MOI) the culture survives, at 3.0 MOI the culture collapses at the same time as cells without the Bil system.</text>
</comment>
<comment type="function">
    <text evidence="2">Cleaves a ubiquitin-GFP (Ubl-GFP) fusion protein in vivo.</text>
</comment>
<comment type="cofactor">
    <cofactor evidence="1">
        <name>Zn(2+)</name>
        <dbReference type="ChEBI" id="CHEBI:29105"/>
    </cofactor>
</comment>
<comment type="similarity">
    <text evidence="4">Belongs to the M67B family.</text>
</comment>
<dbReference type="EC" id="3.4.19.-" evidence="2"/>
<dbReference type="EMBL" id="FOLC01000019">
    <property type="protein sequence ID" value="SFD01151.1"/>
    <property type="molecule type" value="Genomic_DNA"/>
</dbReference>
<dbReference type="STRING" id="1801619.SAMN04515619_11956"/>
<dbReference type="Proteomes" id="UP000199381">
    <property type="component" value="Unassembled WGS sequence"/>
</dbReference>
<dbReference type="GO" id="GO:0046872">
    <property type="term" value="F:metal ion binding"/>
    <property type="evidence" value="ECO:0007669"/>
    <property type="project" value="UniProtKB-KW"/>
</dbReference>
<dbReference type="GO" id="GO:0008237">
    <property type="term" value="F:metallopeptidase activity"/>
    <property type="evidence" value="ECO:0007669"/>
    <property type="project" value="UniProtKB-KW"/>
</dbReference>
<dbReference type="GO" id="GO:0019783">
    <property type="term" value="F:ubiquitin-like protein peptidase activity"/>
    <property type="evidence" value="ECO:0000314"/>
    <property type="project" value="UniProtKB"/>
</dbReference>
<dbReference type="GO" id="GO:0051607">
    <property type="term" value="P:defense response to virus"/>
    <property type="evidence" value="ECO:0000314"/>
    <property type="project" value="UniProtKB"/>
</dbReference>
<dbReference type="GO" id="GO:0032446">
    <property type="term" value="P:protein modification by small protein conjugation"/>
    <property type="evidence" value="ECO:0000314"/>
    <property type="project" value="UniProtKB"/>
</dbReference>
<dbReference type="GO" id="GO:0006508">
    <property type="term" value="P:proteolysis"/>
    <property type="evidence" value="ECO:0007669"/>
    <property type="project" value="UniProtKB-KW"/>
</dbReference>
<dbReference type="Gene3D" id="3.40.140.10">
    <property type="entry name" value="Cytidine Deaminase, domain 2"/>
    <property type="match status" value="1"/>
</dbReference>
<dbReference type="InterPro" id="IPR028090">
    <property type="entry name" value="JAB_dom_prok"/>
</dbReference>
<dbReference type="Pfam" id="PF14464">
    <property type="entry name" value="Prok-JAB"/>
    <property type="match status" value="1"/>
</dbReference>
<dbReference type="SUPFAM" id="SSF102712">
    <property type="entry name" value="JAB1/MPN domain"/>
    <property type="match status" value="1"/>
</dbReference>
<organism>
    <name type="scientific">Collimonas sp. (strain OK412)</name>
    <dbReference type="NCBI Taxonomy" id="1801619"/>
    <lineage>
        <taxon>Bacteria</taxon>
        <taxon>Pseudomonadati</taxon>
        <taxon>Pseudomonadota</taxon>
        <taxon>Betaproteobacteria</taxon>
        <taxon>Burkholderiales</taxon>
        <taxon>Oxalobacteraceae</taxon>
        <taxon>Collimonas</taxon>
    </lineage>
</organism>
<proteinExistence type="evidence at protein level"/>
<keyword id="KW-0051">Antiviral defense</keyword>
<keyword id="KW-0378">Hydrolase</keyword>
<keyword id="KW-0479">Metal-binding</keyword>
<keyword id="KW-0482">Metalloprotease</keyword>
<keyword id="KW-0645">Protease</keyword>
<keyword id="KW-0833">Ubl conjugation pathway</keyword>
<keyword id="KW-0862">Zinc</keyword>
<protein>
    <recommendedName>
        <fullName evidence="3">Bacterial deubiquitinase-like protein BilC</fullName>
        <shortName evidence="3">DUB</shortName>
        <ecNumber evidence="2">3.4.19.-</ecNumber>
    </recommendedName>
</protein>
<feature type="chain" id="PRO_0000462061" description="Bacterial deubiquitinase-like protein BilC">
    <location>
        <begin position="1"/>
        <end position="173"/>
    </location>
</feature>
<feature type="binding site" evidence="1">
    <location>
        <position position="103"/>
    </location>
    <ligand>
        <name>Zn(2+)</name>
        <dbReference type="ChEBI" id="CHEBI:29105"/>
        <note>catalytic</note>
    </ligand>
</feature>
<feature type="binding site" evidence="1">
    <location>
        <position position="105"/>
    </location>
    <ligand>
        <name>Zn(2+)</name>
        <dbReference type="ChEBI" id="CHEBI:29105"/>
        <note>catalytic</note>
    </ligand>
</feature>
<feature type="binding site" evidence="1">
    <location>
        <position position="115"/>
    </location>
    <ligand>
        <name>Zn(2+)</name>
        <dbReference type="ChEBI" id="CHEBI:29105"/>
        <note>catalytic</note>
    </ligand>
</feature>
<feature type="mutagenesis site" description="No longer resistant to SECphi27, SECphi18, SECphi6, SECphi4, does not cleave a Ubl-GFP fusion protein." evidence="2">
    <original>D</original>
    <variation>A</variation>
    <location>
        <position position="115"/>
    </location>
</feature>
<gene>
    <name evidence="3" type="primary">bilC</name>
    <name evidence="6" type="ORF">SAMN04515619_11956</name>
</gene>
<reference key="1">
    <citation type="submission" date="2016-10" db="EMBL/GenBank/DDBJ databases">
        <authorList>
            <person name="de Groot N.N."/>
        </authorList>
    </citation>
    <scope>NUCLEOTIDE SEQUENCE [LARGE SCALE GENOMIC DNA]</scope>
    <source>
        <strain evidence="6">OK412</strain>
    </source>
</reference>
<reference key="2">
    <citation type="journal article" date="2024" name="Nature">
        <title>Bacteria conjugate ubiquitin-like proteins to interfere with phage assembly.</title>
        <authorList>
            <person name="Hoer J."/>
            <person name="Wolf S.G."/>
            <person name="Sorek R."/>
        </authorList>
    </citation>
    <scope>FUNCTION</scope>
    <scope>MUTAGENESIS OF ASP-115</scope>
</reference>